<dbReference type="EC" id="3.2.2.27" evidence="1"/>
<dbReference type="EMBL" id="BX936398">
    <property type="protein sequence ID" value="CAH22142.1"/>
    <property type="molecule type" value="Genomic_DNA"/>
</dbReference>
<dbReference type="RefSeq" id="WP_002209663.1">
    <property type="nucleotide sequence ID" value="NZ_CP009712.1"/>
</dbReference>
<dbReference type="SMR" id="Q667T7"/>
<dbReference type="GeneID" id="57975987"/>
<dbReference type="KEGG" id="ypo:BZ17_3725"/>
<dbReference type="KEGG" id="yps:YPTB2904"/>
<dbReference type="PATRIC" id="fig|273123.14.peg.3908"/>
<dbReference type="Proteomes" id="UP000001011">
    <property type="component" value="Chromosome"/>
</dbReference>
<dbReference type="GO" id="GO:0005737">
    <property type="term" value="C:cytoplasm"/>
    <property type="evidence" value="ECO:0007669"/>
    <property type="project" value="UniProtKB-SubCell"/>
</dbReference>
<dbReference type="GO" id="GO:0004844">
    <property type="term" value="F:uracil DNA N-glycosylase activity"/>
    <property type="evidence" value="ECO:0007669"/>
    <property type="project" value="UniProtKB-UniRule"/>
</dbReference>
<dbReference type="GO" id="GO:0097510">
    <property type="term" value="P:base-excision repair, AP site formation via deaminated base removal"/>
    <property type="evidence" value="ECO:0007669"/>
    <property type="project" value="TreeGrafter"/>
</dbReference>
<dbReference type="CDD" id="cd10027">
    <property type="entry name" value="UDG-F1-like"/>
    <property type="match status" value="1"/>
</dbReference>
<dbReference type="FunFam" id="3.40.470.10:FF:000001">
    <property type="entry name" value="Uracil-DNA glycosylase"/>
    <property type="match status" value="1"/>
</dbReference>
<dbReference type="Gene3D" id="3.40.470.10">
    <property type="entry name" value="Uracil-DNA glycosylase-like domain"/>
    <property type="match status" value="1"/>
</dbReference>
<dbReference type="HAMAP" id="MF_00148">
    <property type="entry name" value="UDG"/>
    <property type="match status" value="1"/>
</dbReference>
<dbReference type="InterPro" id="IPR002043">
    <property type="entry name" value="UDG_fam1"/>
</dbReference>
<dbReference type="InterPro" id="IPR018085">
    <property type="entry name" value="Ura-DNA_Glyclase_AS"/>
</dbReference>
<dbReference type="InterPro" id="IPR005122">
    <property type="entry name" value="Uracil-DNA_glycosylase-like"/>
</dbReference>
<dbReference type="InterPro" id="IPR036895">
    <property type="entry name" value="Uracil-DNA_glycosylase-like_sf"/>
</dbReference>
<dbReference type="NCBIfam" id="NF003588">
    <property type="entry name" value="PRK05254.1-1"/>
    <property type="match status" value="1"/>
</dbReference>
<dbReference type="NCBIfam" id="NF003589">
    <property type="entry name" value="PRK05254.1-2"/>
    <property type="match status" value="1"/>
</dbReference>
<dbReference type="NCBIfam" id="NF003591">
    <property type="entry name" value="PRK05254.1-4"/>
    <property type="match status" value="1"/>
</dbReference>
<dbReference type="NCBIfam" id="NF003592">
    <property type="entry name" value="PRK05254.1-5"/>
    <property type="match status" value="1"/>
</dbReference>
<dbReference type="NCBIfam" id="TIGR00628">
    <property type="entry name" value="ung"/>
    <property type="match status" value="1"/>
</dbReference>
<dbReference type="PANTHER" id="PTHR11264">
    <property type="entry name" value="URACIL-DNA GLYCOSYLASE"/>
    <property type="match status" value="1"/>
</dbReference>
<dbReference type="PANTHER" id="PTHR11264:SF0">
    <property type="entry name" value="URACIL-DNA GLYCOSYLASE"/>
    <property type="match status" value="1"/>
</dbReference>
<dbReference type="Pfam" id="PF03167">
    <property type="entry name" value="UDG"/>
    <property type="match status" value="1"/>
</dbReference>
<dbReference type="SMART" id="SM00986">
    <property type="entry name" value="UDG"/>
    <property type="match status" value="1"/>
</dbReference>
<dbReference type="SMART" id="SM00987">
    <property type="entry name" value="UreE_C"/>
    <property type="match status" value="1"/>
</dbReference>
<dbReference type="SUPFAM" id="SSF52141">
    <property type="entry name" value="Uracil-DNA glycosylase-like"/>
    <property type="match status" value="1"/>
</dbReference>
<dbReference type="PROSITE" id="PS00130">
    <property type="entry name" value="U_DNA_GLYCOSYLASE"/>
    <property type="match status" value="1"/>
</dbReference>
<protein>
    <recommendedName>
        <fullName evidence="1">Uracil-DNA glycosylase</fullName>
        <shortName evidence="1">UDG</shortName>
        <ecNumber evidence="1">3.2.2.27</ecNumber>
    </recommendedName>
</protein>
<comment type="function">
    <text evidence="1">Excises uracil residues from the DNA which can arise as a result of misincorporation of dUMP residues by DNA polymerase or due to deamination of cytosine.</text>
</comment>
<comment type="catalytic activity">
    <reaction evidence="1">
        <text>Hydrolyzes single-stranded DNA or mismatched double-stranded DNA and polynucleotides, releasing free uracil.</text>
        <dbReference type="EC" id="3.2.2.27"/>
    </reaction>
</comment>
<comment type="subcellular location">
    <subcellularLocation>
        <location evidence="1">Cytoplasm</location>
    </subcellularLocation>
</comment>
<comment type="similarity">
    <text evidence="1">Belongs to the uracil-DNA glycosylase (UDG) superfamily. UNG family.</text>
</comment>
<sequence length="228" mass="25559">MSPSLTWHDVIGQEKEQPYFKDTLAYVAAERRAGKTIYPPQKDIFNAFRLTELDQVKVVILGQDPYHGPNQAHGLSFSVLPGVPAPPSLGNIYKELVTDIPGFQRPNHGFLQSWAEQGVLLLNTVLTVEAGKAHSHANLGWETFTDKVIAALNEHREGVIFMLWGSHAQKKGRIINTERHYILKAPHPSPLSAHRGFLGCKHFSQANQLLQQQNQQPIDWQPKLPAVE</sequence>
<accession>Q667T7</accession>
<feature type="chain" id="PRO_1000009970" description="Uracil-DNA glycosylase">
    <location>
        <begin position="1"/>
        <end position="228"/>
    </location>
</feature>
<feature type="active site" description="Proton acceptor" evidence="1">
    <location>
        <position position="64"/>
    </location>
</feature>
<evidence type="ECO:0000255" key="1">
    <source>
        <dbReference type="HAMAP-Rule" id="MF_00148"/>
    </source>
</evidence>
<name>UNG_YERPS</name>
<proteinExistence type="inferred from homology"/>
<gene>
    <name evidence="1" type="primary">ung</name>
    <name type="ordered locus">YPTB2904</name>
</gene>
<reference key="1">
    <citation type="journal article" date="2004" name="Proc. Natl. Acad. Sci. U.S.A.">
        <title>Insights into the evolution of Yersinia pestis through whole-genome comparison with Yersinia pseudotuberculosis.</title>
        <authorList>
            <person name="Chain P.S.G."/>
            <person name="Carniel E."/>
            <person name="Larimer F.W."/>
            <person name="Lamerdin J."/>
            <person name="Stoutland P.O."/>
            <person name="Regala W.M."/>
            <person name="Georgescu A.M."/>
            <person name="Vergez L.M."/>
            <person name="Land M.L."/>
            <person name="Motin V.L."/>
            <person name="Brubaker R.R."/>
            <person name="Fowler J."/>
            <person name="Hinnebusch J."/>
            <person name="Marceau M."/>
            <person name="Medigue C."/>
            <person name="Simonet M."/>
            <person name="Chenal-Francisque V."/>
            <person name="Souza B."/>
            <person name="Dacheux D."/>
            <person name="Elliott J.M."/>
            <person name="Derbise A."/>
            <person name="Hauser L.J."/>
            <person name="Garcia E."/>
        </authorList>
    </citation>
    <scope>NUCLEOTIDE SEQUENCE [LARGE SCALE GENOMIC DNA]</scope>
    <source>
        <strain>IP32953</strain>
    </source>
</reference>
<organism>
    <name type="scientific">Yersinia pseudotuberculosis serotype I (strain IP32953)</name>
    <dbReference type="NCBI Taxonomy" id="273123"/>
    <lineage>
        <taxon>Bacteria</taxon>
        <taxon>Pseudomonadati</taxon>
        <taxon>Pseudomonadota</taxon>
        <taxon>Gammaproteobacteria</taxon>
        <taxon>Enterobacterales</taxon>
        <taxon>Yersiniaceae</taxon>
        <taxon>Yersinia</taxon>
    </lineage>
</organism>
<keyword id="KW-0963">Cytoplasm</keyword>
<keyword id="KW-0227">DNA damage</keyword>
<keyword id="KW-0234">DNA repair</keyword>
<keyword id="KW-0378">Hydrolase</keyword>